<sequence>MTDSKSNSNSPSLSYKDAGVDIDAGNALVERIKSVAKRTRRPEVMAGLGGFGALFELPKGYQEPVLVAGTDGVGTKLKLAMQLNKHDTIGIDLVAMCVNDLIVGGAEPLFFLDYYATGKLSVDVAASVVEGIGAGCELSGCSLVGGETAEMPGMYEGEDYDLAGFCVGIVEKSKILDGSKVAAGDVLLGIPSSGPHSNGYSLIRKVLEVSGASLDDKVGDTTLGQALLEPTRIYVKPLLELFKNVQVNALSHITGGGLLENIPRVLPENTRAQIDCASWELPPVFKWLQEQGNINAVEMYRTFNCGVGMIVCVPAAEAANAIAQLKQSGEDAFEIGKIVAAEGAPEVDLLNL</sequence>
<keyword id="KW-0067">ATP-binding</keyword>
<keyword id="KW-0963">Cytoplasm</keyword>
<keyword id="KW-0436">Ligase</keyword>
<keyword id="KW-0547">Nucleotide-binding</keyword>
<keyword id="KW-0658">Purine biosynthesis</keyword>
<keyword id="KW-1185">Reference proteome</keyword>
<name>PUR5_SACD2</name>
<comment type="catalytic activity">
    <reaction evidence="1">
        <text>2-formamido-N(1)-(5-O-phospho-beta-D-ribosyl)acetamidine + ATP = 5-amino-1-(5-phospho-beta-D-ribosyl)imidazole + ADP + phosphate + H(+)</text>
        <dbReference type="Rhea" id="RHEA:23032"/>
        <dbReference type="ChEBI" id="CHEBI:15378"/>
        <dbReference type="ChEBI" id="CHEBI:30616"/>
        <dbReference type="ChEBI" id="CHEBI:43474"/>
        <dbReference type="ChEBI" id="CHEBI:137981"/>
        <dbReference type="ChEBI" id="CHEBI:147287"/>
        <dbReference type="ChEBI" id="CHEBI:456216"/>
        <dbReference type="EC" id="6.3.3.1"/>
    </reaction>
</comment>
<comment type="pathway">
    <text evidence="1">Purine metabolism; IMP biosynthesis via de novo pathway; 5-amino-1-(5-phospho-D-ribosyl)imidazole from N(2)-formyl-N(1)-(5-phospho-D-ribosyl)glycinamide: step 2/2.</text>
</comment>
<comment type="subcellular location">
    <subcellularLocation>
        <location evidence="1">Cytoplasm</location>
    </subcellularLocation>
</comment>
<comment type="similarity">
    <text evidence="1">Belongs to the AIR synthase family.</text>
</comment>
<comment type="sequence caution" evidence="2">
    <conflict type="erroneous initiation">
        <sequence resource="EMBL-CDS" id="ABD80156"/>
    </conflict>
</comment>
<reference key="1">
    <citation type="journal article" date="2008" name="PLoS Genet.">
        <title>Complete genome sequence of the complex carbohydrate-degrading marine bacterium, Saccharophagus degradans strain 2-40 T.</title>
        <authorList>
            <person name="Weiner R.M."/>
            <person name="Taylor L.E. II"/>
            <person name="Henrissat B."/>
            <person name="Hauser L."/>
            <person name="Land M."/>
            <person name="Coutinho P.M."/>
            <person name="Rancurel C."/>
            <person name="Saunders E.H."/>
            <person name="Longmire A.G."/>
            <person name="Zhang H."/>
            <person name="Bayer E.A."/>
            <person name="Gilbert H.J."/>
            <person name="Larimer F."/>
            <person name="Zhulin I.B."/>
            <person name="Ekborg N.A."/>
            <person name="Lamed R."/>
            <person name="Richardson P.M."/>
            <person name="Borovok I."/>
            <person name="Hutcheson S."/>
        </authorList>
    </citation>
    <scope>NUCLEOTIDE SEQUENCE [LARGE SCALE GENOMIC DNA]</scope>
    <source>
        <strain>2-40 / ATCC 43961 / DSM 17024</strain>
    </source>
</reference>
<feature type="chain" id="PRO_0000258399" description="Phosphoribosylformylglycinamidine cyclo-ligase">
    <location>
        <begin position="1"/>
        <end position="352"/>
    </location>
</feature>
<accession>Q21MC3</accession>
<dbReference type="EC" id="6.3.3.1" evidence="1"/>
<dbReference type="EMBL" id="CP000282">
    <property type="protein sequence ID" value="ABD80156.1"/>
    <property type="status" value="ALT_INIT"/>
    <property type="molecule type" value="Genomic_DNA"/>
</dbReference>
<dbReference type="RefSeq" id="WP_041324241.1">
    <property type="nucleotide sequence ID" value="NC_007912.1"/>
</dbReference>
<dbReference type="SMR" id="Q21MC3"/>
<dbReference type="STRING" id="203122.Sde_0894"/>
<dbReference type="GeneID" id="98612575"/>
<dbReference type="KEGG" id="sde:Sde_0894"/>
<dbReference type="eggNOG" id="COG0150">
    <property type="taxonomic scope" value="Bacteria"/>
</dbReference>
<dbReference type="HOGENOM" id="CLU_047116_0_0_6"/>
<dbReference type="OrthoDB" id="9777881at2"/>
<dbReference type="UniPathway" id="UPA00074">
    <property type="reaction ID" value="UER00129"/>
</dbReference>
<dbReference type="Proteomes" id="UP000001947">
    <property type="component" value="Chromosome"/>
</dbReference>
<dbReference type="GO" id="GO:0005829">
    <property type="term" value="C:cytosol"/>
    <property type="evidence" value="ECO:0007669"/>
    <property type="project" value="TreeGrafter"/>
</dbReference>
<dbReference type="GO" id="GO:0005524">
    <property type="term" value="F:ATP binding"/>
    <property type="evidence" value="ECO:0007669"/>
    <property type="project" value="UniProtKB-KW"/>
</dbReference>
<dbReference type="GO" id="GO:0004637">
    <property type="term" value="F:phosphoribosylamine-glycine ligase activity"/>
    <property type="evidence" value="ECO:0007669"/>
    <property type="project" value="TreeGrafter"/>
</dbReference>
<dbReference type="GO" id="GO:0004641">
    <property type="term" value="F:phosphoribosylformylglycinamidine cyclo-ligase activity"/>
    <property type="evidence" value="ECO:0007669"/>
    <property type="project" value="UniProtKB-UniRule"/>
</dbReference>
<dbReference type="GO" id="GO:0006189">
    <property type="term" value="P:'de novo' IMP biosynthetic process"/>
    <property type="evidence" value="ECO:0007669"/>
    <property type="project" value="UniProtKB-UniRule"/>
</dbReference>
<dbReference type="GO" id="GO:0046084">
    <property type="term" value="P:adenine biosynthetic process"/>
    <property type="evidence" value="ECO:0007669"/>
    <property type="project" value="TreeGrafter"/>
</dbReference>
<dbReference type="CDD" id="cd02196">
    <property type="entry name" value="PurM"/>
    <property type="match status" value="1"/>
</dbReference>
<dbReference type="FunFam" id="3.30.1330.10:FF:000001">
    <property type="entry name" value="Phosphoribosylformylglycinamidine cyclo-ligase"/>
    <property type="match status" value="1"/>
</dbReference>
<dbReference type="FunFam" id="3.90.650.10:FF:000001">
    <property type="entry name" value="Phosphoribosylformylglycinamidine cyclo-ligase"/>
    <property type="match status" value="1"/>
</dbReference>
<dbReference type="Gene3D" id="3.90.650.10">
    <property type="entry name" value="PurM-like C-terminal domain"/>
    <property type="match status" value="1"/>
</dbReference>
<dbReference type="Gene3D" id="3.30.1330.10">
    <property type="entry name" value="PurM-like, N-terminal domain"/>
    <property type="match status" value="1"/>
</dbReference>
<dbReference type="HAMAP" id="MF_00741">
    <property type="entry name" value="AIRS"/>
    <property type="match status" value="1"/>
</dbReference>
<dbReference type="InterPro" id="IPR010918">
    <property type="entry name" value="PurM-like_C_dom"/>
</dbReference>
<dbReference type="InterPro" id="IPR036676">
    <property type="entry name" value="PurM-like_C_sf"/>
</dbReference>
<dbReference type="InterPro" id="IPR016188">
    <property type="entry name" value="PurM-like_N"/>
</dbReference>
<dbReference type="InterPro" id="IPR036921">
    <property type="entry name" value="PurM-like_N_sf"/>
</dbReference>
<dbReference type="InterPro" id="IPR004733">
    <property type="entry name" value="PurM_cligase"/>
</dbReference>
<dbReference type="NCBIfam" id="TIGR00878">
    <property type="entry name" value="purM"/>
    <property type="match status" value="1"/>
</dbReference>
<dbReference type="PANTHER" id="PTHR10520:SF12">
    <property type="entry name" value="TRIFUNCTIONAL PURINE BIOSYNTHETIC PROTEIN ADENOSINE-3"/>
    <property type="match status" value="1"/>
</dbReference>
<dbReference type="PANTHER" id="PTHR10520">
    <property type="entry name" value="TRIFUNCTIONAL PURINE BIOSYNTHETIC PROTEIN ADENOSINE-3-RELATED"/>
    <property type="match status" value="1"/>
</dbReference>
<dbReference type="Pfam" id="PF00586">
    <property type="entry name" value="AIRS"/>
    <property type="match status" value="1"/>
</dbReference>
<dbReference type="Pfam" id="PF02769">
    <property type="entry name" value="AIRS_C"/>
    <property type="match status" value="1"/>
</dbReference>
<dbReference type="SUPFAM" id="SSF56042">
    <property type="entry name" value="PurM C-terminal domain-like"/>
    <property type="match status" value="1"/>
</dbReference>
<dbReference type="SUPFAM" id="SSF55326">
    <property type="entry name" value="PurM N-terminal domain-like"/>
    <property type="match status" value="1"/>
</dbReference>
<protein>
    <recommendedName>
        <fullName evidence="1">Phosphoribosylformylglycinamidine cyclo-ligase</fullName>
        <ecNumber evidence="1">6.3.3.1</ecNumber>
    </recommendedName>
    <alternativeName>
        <fullName evidence="1">AIR synthase</fullName>
    </alternativeName>
    <alternativeName>
        <fullName evidence="1">AIRS</fullName>
    </alternativeName>
    <alternativeName>
        <fullName evidence="1">Phosphoribosyl-aminoimidazole synthetase</fullName>
    </alternativeName>
</protein>
<organism>
    <name type="scientific">Saccharophagus degradans (strain 2-40 / ATCC 43961 / DSM 17024)</name>
    <dbReference type="NCBI Taxonomy" id="203122"/>
    <lineage>
        <taxon>Bacteria</taxon>
        <taxon>Pseudomonadati</taxon>
        <taxon>Pseudomonadota</taxon>
        <taxon>Gammaproteobacteria</taxon>
        <taxon>Cellvibrionales</taxon>
        <taxon>Cellvibrionaceae</taxon>
        <taxon>Saccharophagus</taxon>
    </lineage>
</organism>
<evidence type="ECO:0000255" key="1">
    <source>
        <dbReference type="HAMAP-Rule" id="MF_00741"/>
    </source>
</evidence>
<evidence type="ECO:0000305" key="2"/>
<proteinExistence type="inferred from homology"/>
<gene>
    <name evidence="1" type="primary">purM</name>
    <name type="ordered locus">Sde_0894</name>
</gene>